<feature type="chain" id="PRO_0000445854" description="RNA2 polyprotein">
    <location>
        <begin position="1"/>
        <end position="1009"/>
    </location>
</feature>
<feature type="chain" id="PRO_0000445855" description="VP58">
    <location>
        <begin position="1"/>
        <end position="90"/>
    </location>
</feature>
<feature type="chain" id="PRO_0000037037" description="Movement protein">
    <location>
        <begin position="91"/>
        <end position="451"/>
    </location>
</feature>
<feature type="chain" id="PRO_0000037038" description="Large capsid protein">
    <location>
        <begin position="452"/>
        <end position="825"/>
    </location>
</feature>
<feature type="chain" id="PRO_0000037039" description="Small capsid protein">
    <location>
        <begin position="826"/>
        <end position="1009"/>
    </location>
</feature>
<feature type="region of interest" description="Involved in tubule formation by the movement protein" evidence="1">
    <location>
        <begin position="387"/>
        <end position="393"/>
    </location>
</feature>
<feature type="site" description="Cleavage; by viral protease" evidence="3">
    <location>
        <begin position="451"/>
        <end position="452"/>
    </location>
</feature>
<feature type="site" description="Interaction with the viral RNA" evidence="1">
    <location>
        <position position="468"/>
    </location>
</feature>
<feature type="site" description="Cleavage; by viral protease" evidence="3">
    <location>
        <begin position="825"/>
        <end position="826"/>
    </location>
</feature>
<feature type="sequence variant" description="In strain: Melon." evidence="4">
    <original>R</original>
    <variation>K</variation>
    <location>
        <position position="315"/>
    </location>
</feature>
<feature type="sequence variant" description="In strain: Melon." evidence="4">
    <original>D</original>
    <variation>N</variation>
    <location>
        <position position="562"/>
    </location>
</feature>
<feature type="sequence variant" description="In strain: Melon." evidence="4">
    <original>A</original>
    <variation>R</variation>
    <location>
        <position position="740"/>
    </location>
</feature>
<name>POL2_SQMVM</name>
<dbReference type="EMBL" id="M96148">
    <property type="status" value="NOT_ANNOTATED_CDS"/>
    <property type="molecule type" value="Genomic_RNA"/>
</dbReference>
<dbReference type="EMBL" id="MF166754">
    <property type="protein sequence ID" value="ASA69625.1"/>
    <property type="molecule type" value="Genomic_RNA"/>
</dbReference>
<dbReference type="EMBL" id="MF166755">
    <property type="protein sequence ID" value="ASA69626.1"/>
    <property type="molecule type" value="Genomic_RNA"/>
</dbReference>
<dbReference type="PIR" id="A48356">
    <property type="entry name" value="A48356"/>
</dbReference>
<dbReference type="SMR" id="P36341"/>
<dbReference type="GO" id="GO:0044219">
    <property type="term" value="C:host cell plasmodesma"/>
    <property type="evidence" value="ECO:0007669"/>
    <property type="project" value="UniProtKB-SubCell"/>
</dbReference>
<dbReference type="GO" id="GO:0039617">
    <property type="term" value="C:T=3 icosahedral viral capsid"/>
    <property type="evidence" value="ECO:0007669"/>
    <property type="project" value="UniProtKB-KW"/>
</dbReference>
<dbReference type="GO" id="GO:0003677">
    <property type="term" value="F:DNA binding"/>
    <property type="evidence" value="ECO:0007669"/>
    <property type="project" value="UniProtKB-KW"/>
</dbReference>
<dbReference type="GO" id="GO:0005525">
    <property type="term" value="F:GTP binding"/>
    <property type="evidence" value="ECO:0007669"/>
    <property type="project" value="UniProtKB-KW"/>
</dbReference>
<dbReference type="GO" id="GO:0003723">
    <property type="term" value="F:RNA binding"/>
    <property type="evidence" value="ECO:0007669"/>
    <property type="project" value="UniProtKB-KW"/>
</dbReference>
<dbReference type="GO" id="GO:0005198">
    <property type="term" value="F:structural molecule activity"/>
    <property type="evidence" value="ECO:0007669"/>
    <property type="project" value="InterPro"/>
</dbReference>
<dbReference type="GO" id="GO:0052170">
    <property type="term" value="P:symbiont-mediated suppression of host innate immune response"/>
    <property type="evidence" value="ECO:0007669"/>
    <property type="project" value="UniProtKB-KW"/>
</dbReference>
<dbReference type="GO" id="GO:0046740">
    <property type="term" value="P:transport of virus in host, cell to cell"/>
    <property type="evidence" value="ECO:0007669"/>
    <property type="project" value="UniProtKB-KW"/>
</dbReference>
<dbReference type="Gene3D" id="2.60.120.20">
    <property type="match status" value="2"/>
</dbReference>
<dbReference type="InterPro" id="IPR003181">
    <property type="entry name" value="Como_LCP"/>
</dbReference>
<dbReference type="InterPro" id="IPR003182">
    <property type="entry name" value="RNA2_polyprotein"/>
</dbReference>
<dbReference type="InterPro" id="IPR029053">
    <property type="entry name" value="Viral_coat"/>
</dbReference>
<dbReference type="Pfam" id="PF02247">
    <property type="entry name" value="Como_LCP"/>
    <property type="match status" value="1"/>
</dbReference>
<dbReference type="Pfam" id="PF02248">
    <property type="entry name" value="Como_SCP"/>
    <property type="match status" value="1"/>
</dbReference>
<dbReference type="SUPFAM" id="SSF88633">
    <property type="entry name" value="Positive stranded ssRNA viruses"/>
    <property type="match status" value="3"/>
</dbReference>
<comment type="function">
    <molecule>VP58</molecule>
    <text evidence="2">Responsible for viral RNA2 accumulation. May function by recruiting the RNA1-encoded polyprotein that contains the replication protein to RNA2 and enable its replication.</text>
</comment>
<comment type="function">
    <molecule>Movement protein</molecule>
    <text evidence="1">Transports the viral genome to neighboring plant cells directly through plasmosdesmata, without any budding. The movement protein allows efficient cell to cell propagation, by bypassing the host cell wall barrier. Acts by forming a tubular structure at the host plasmodesmata, enlarging it enough to allow free passage of virion capsids. Binds to GTP and to single-stranded RNA and single-stranded DNA in a non-sequence-specific manner.</text>
</comment>
<comment type="function">
    <molecule>Large capsid protein</molecule>
    <text evidence="1">Together with the small capsid protein, forms an icosahedral capsid (T=3) enclosing the viral positive strand RNA genome, with a diameter of approximately 300 Angstroms. The capsid is formed from 60 copies each of the large and the small capsid protein. The large capsid protein interacts with the viral RNA.</text>
</comment>
<comment type="function">
    <molecule>Small capsid protein</molecule>
    <text evidence="1">Together with the large capsid protein, forms an icosahedral capsid (T=3) enclosing the viral positive strand RNA genome, with a diameter of approximately 300 Angstroms. The capsid is formed from 60 copies each of the large and the small capsid protein. The small capsid protein forms the turrets at the fivefold axes of the viral particle.</text>
</comment>
<comment type="subunit">
    <molecule>Small capsid protein</molecule>
    <text evidence="1">Interacts with the large capsid protein.</text>
</comment>
<comment type="subunit">
    <molecule>Large capsid protein</molecule>
    <text evidence="1">Interacts with the small capsid protein. Homomultimer; assembles as pentons. Interacts with the movement protein (via C-terminus).</text>
</comment>
<comment type="subunit">
    <molecule>Movement protein</molecule>
    <text evidence="1">Interacts (via C-terminus) with the large capsid protein.</text>
</comment>
<comment type="subcellular location">
    <molecule>Movement protein</molecule>
    <subcellularLocation>
        <location evidence="1">Host cell junction</location>
        <location evidence="1">Host plasmodesma</location>
    </subcellularLocation>
    <text evidence="1">Assembles in tubules that are embedded within modified plasmodesmata.</text>
</comment>
<comment type="subcellular location">
    <molecule>Large capsid protein</molecule>
    <subcellularLocation>
        <location evidence="1">Virion</location>
    </subcellularLocation>
</comment>
<comment type="subcellular location">
    <molecule>Small capsid protein</molecule>
    <subcellularLocation>
        <location evidence="1">Virion</location>
    </subcellularLocation>
</comment>
<comment type="domain">
    <molecule>Large capsid protein</molecule>
    <text evidence="1">Contains a beta-sheet structure called beta-barrel jelly roll.</text>
</comment>
<comment type="domain">
    <molecule>Small capsid protein</molecule>
    <text evidence="1">Contains a beta-sheet structure called beta-barrel jelly roll.</text>
</comment>
<comment type="domain">
    <molecule>Movement protein</molecule>
    <text evidence="1">The C-terminus is involved in binding to the large capsid protein, and hence to the virion.</text>
</comment>
<comment type="PTM">
    <molecule>RNA2 polyprotein</molecule>
    <text evidence="5">Specific enzymatic cleavages by picornain 3C-like protease in vivo yield mature proteins.</text>
</comment>
<protein>
    <recommendedName>
        <fullName>RNA2 polyprotein</fullName>
    </recommendedName>
    <alternativeName>
        <fullName>Genome polyprotein M</fullName>
    </alternativeName>
    <alternativeName>
        <fullName>M RNA polyprotein</fullName>
    </alternativeName>
    <alternativeName>
        <fullName>Middle component RNA polyprotein</fullName>
    </alternativeName>
    <alternativeName>
        <fullName>P2</fullName>
    </alternativeName>
    <component>
        <recommendedName>
            <fullName>VP58</fullName>
        </recommendedName>
    </component>
    <component>
        <recommendedName>
            <fullName>Movement protein</fullName>
            <shortName>MP</shortName>
        </recommendedName>
    </component>
    <component>
        <recommendedName>
            <fullName>Large capsid protein</fullName>
            <shortName>LCP</shortName>
        </recommendedName>
        <alternativeName>
            <fullName>42k coat protein</fullName>
        </alternativeName>
        <alternativeName>
            <fullName>Coat protein VP42</fullName>
        </alternativeName>
        <alternativeName>
            <fullName>L subunit</fullName>
        </alternativeName>
        <alternativeName>
            <fullName>Large coat protein</fullName>
        </alternativeName>
    </component>
    <component>
        <recommendedName>
            <fullName>Small capsid protein</fullName>
            <shortName>SCP</shortName>
        </recommendedName>
        <alternativeName>
            <fullName>22k coat protein</fullName>
        </alternativeName>
        <alternativeName>
            <fullName>Coat protein VP22</fullName>
        </alternativeName>
        <alternativeName>
            <fullName>S subunit</fullName>
        </alternativeName>
    </component>
</protein>
<evidence type="ECO:0000250" key="1">
    <source>
        <dbReference type="UniProtKB" id="P03599"/>
    </source>
</evidence>
<evidence type="ECO:0000250" key="2">
    <source>
        <dbReference type="UniProtKB" id="P23009"/>
    </source>
</evidence>
<evidence type="ECO:0000269" key="3">
    <source>
    </source>
</evidence>
<evidence type="ECO:0000305" key="4"/>
<evidence type="ECO:0000305" key="5">
    <source>
    </source>
</evidence>
<keyword id="KW-0167">Capsid protein</keyword>
<keyword id="KW-0903">Direct protein sequencing</keyword>
<keyword id="KW-0238">DNA-binding</keyword>
<keyword id="KW-0342">GTP-binding</keyword>
<keyword id="KW-1031">Host cell junction</keyword>
<keyword id="KW-0945">Host-virus interaction</keyword>
<keyword id="KW-1090">Inhibition of host innate immune response by virus</keyword>
<keyword id="KW-0547">Nucleotide-binding</keyword>
<keyword id="KW-0694">RNA-binding</keyword>
<keyword id="KW-0941">Suppressor of RNA silencing</keyword>
<keyword id="KW-1142">T=3 icosahedral capsid protein</keyword>
<keyword id="KW-0813">Transport</keyword>
<keyword id="KW-0899">Viral immunoevasion</keyword>
<keyword id="KW-0916">Viral movement protein</keyword>
<keyword id="KW-0946">Virion</keyword>
<proteinExistence type="evidence at protein level"/>
<organism>
    <name type="scientific">Squash mosaic virus (strain melon)</name>
    <name type="common">SqMV</name>
    <dbReference type="NCBI Taxonomy" id="36401"/>
    <lineage>
        <taxon>Viruses</taxon>
        <taxon>Riboviria</taxon>
        <taxon>Orthornavirae</taxon>
        <taxon>Pisuviricota</taxon>
        <taxon>Pisoniviricetes</taxon>
        <taxon>Picornavirales</taxon>
        <taxon>Secoviridae</taxon>
        <taxon>Comovirinae</taxon>
        <taxon>Comovirus</taxon>
        <taxon>Comovirus cucurbitae</taxon>
    </lineage>
</organism>
<organismHost>
    <name type="scientific">Chenopodium album</name>
    <name type="common">Fat hen</name>
    <dbReference type="NCBI Taxonomy" id="3559"/>
</organismHost>
<organismHost>
    <name type="scientific">Citrullus lanatus</name>
    <name type="common">Watermelon</name>
    <name type="synonym">Citrullus vulgaris</name>
    <dbReference type="NCBI Taxonomy" id="3654"/>
</organismHost>
<organismHost>
    <name type="scientific">Cucurbita pepo</name>
    <name type="common">Vegetable marrow</name>
    <name type="synonym">Summer squash</name>
    <dbReference type="NCBI Taxonomy" id="3663"/>
</organismHost>
<organismHost>
    <name type="scientific">Ecballium elaterium</name>
    <name type="common">Squirting cucumber</name>
    <name type="synonym">Momordica elaterium</name>
    <dbReference type="NCBI Taxonomy" id="3679"/>
</organismHost>
<reference key="1">
    <citation type="submission" date="2017-05" db="EMBL/GenBank/DDBJ databases">
        <authorList>
            <person name="Song R."/>
            <person name="Chenine A.L."/>
            <person name="Ruprecht R.M."/>
        </authorList>
    </citation>
    <scope>NUCLEOTIDE SEQUENCE [GENOMIC RNA]</scope>
    <source>
        <strain>Isolate 697K2</strain>
        <strain>Isolate 702K2</strain>
    </source>
</reference>
<reference key="2">
    <citation type="journal article" date="1993" name="Arch. Virol.">
        <title>The coat protein genes of squash mosaic virus: cloning, sequence analysis, and expression in tobacco protoplasts.</title>
        <authorList>
            <person name="Hu J.S."/>
            <person name="Pang S.Z."/>
            <person name="Nagpala P.G."/>
            <person name="Siemieniak D.R."/>
            <person name="Slightom J.L."/>
            <person name="Gonsalves D."/>
        </authorList>
    </citation>
    <scope>NUCLEOTIDE SEQUENCE [GENOMIC RNA] OF 220-1009</scope>
    <scope>PROTEIN SEQUENCE OF 576-600 AND 825-835</scope>
    <scope>PROTEOLYTIC CLEAVAGE (RNA2 POLYPROTEIN)</scope>
    <source>
        <strain>Melon</strain>
    </source>
</reference>
<sequence length="1009" mass="111788">MWHFCEQVYECFEGYHRDYSVQTVPVEYLASHYIVNKFRPDPLAVLWLFCLGIWWEIIQILHHLFQYKEPALFVGSCQNLAAFLEKKYSMEVIQKEGLAASALKDKERLTEKAVVNQPLSNLIPHSNKMYERSKSLLSGLKRGLIKQKEIAFDKLMGGSTIDFQHIPTGTLTPGENKVLDIPIVPQHLLTSTNITDYHQANKKNANGATALHVGAIEVIMDCFTSPDSNICGGMLLVDTAHLNPDNAIRSVFVAPFIGGRPIRVLLFPDTLVEIAPNMNSRFKLLCTTSNGDVAPDFNLAMVKVNVAGCAVSLTRTYTPTAYLEQELIKEKGAIVQYLNRHTFSMHRNNQMTKEEMQKQRLSFRLESALTLQEKHPLHATFCKSTNFVYKIGGDAKEGSNGNLTVNESQLSSHSPSAHVLHKHNNSGDNEVEFSEIGVVVPGAGRTKAYGQNELDLAQLSLDDTSSLRGTALQTKLATSRIILSKTMVGNTVLREDLLATFLQDSNERAAIDLIRTHVIRGKIRCVASINVPENTGCALAICFNSGITGAADTDIYTTSSQDAIVWNPACEKAVELTFNPNPCGDAWNFVFLQQTKAHFAVQCVTGWTTTPLTDLALVLTWHIDRSLCVPKTLTISSAHASFPINRWMGKLSFPQGPARVLKRMPLAIGGGAGTKDAILMNMPNAVISLHRYFRGDFVFEITKMSSPYIKATIAFFIAFGDITEEMTNLESFPHKLVQFAEIQGRTTITFTQSEFLTAWSTQVLSTVNPQKDGCPHLYALLHDSATSTIEGNFVIGVKLLDIRNYRAYGHNPGFEGARLLGISGQSTMVQQLGTYNPIWMVRTPLESTAQQNFASFTADLMESTISGDSTGNWNITVYPSPIANLLKVAAWKKGTIRFQLICRGAAVKQSDWAASARIDLINNLSNKALPARSWYITKPRGGDIEFDLEIAGPNNGFEMANSSWAFQTTWYLEIAIDNPKQFTLFELNACLMEDFEVAGNTLNPPILLS</sequence>
<accession>P36341</accession>
<accession>A0A1Z2TIL5</accession>